<dbReference type="EC" id="5.3.1.23" evidence="1"/>
<dbReference type="EMBL" id="CU928169">
    <property type="protein sequence ID" value="CAR23272.1"/>
    <property type="molecule type" value="Genomic_DNA"/>
</dbReference>
<dbReference type="RefSeq" id="XP_002553709.1">
    <property type="nucleotide sequence ID" value="XM_002553663.1"/>
</dbReference>
<dbReference type="SMR" id="C5DHL1"/>
<dbReference type="FunCoup" id="C5DHL1">
    <property type="interactions" value="770"/>
</dbReference>
<dbReference type="STRING" id="559295.C5DHL1"/>
<dbReference type="GeneID" id="8291861"/>
<dbReference type="KEGG" id="lth:KLTH0E05236g"/>
<dbReference type="eggNOG" id="KOG1468">
    <property type="taxonomic scope" value="Eukaryota"/>
</dbReference>
<dbReference type="HOGENOM" id="CLU_016218_1_3_1"/>
<dbReference type="InParanoid" id="C5DHL1"/>
<dbReference type="OMA" id="CETRPLN"/>
<dbReference type="OrthoDB" id="2461at2759"/>
<dbReference type="UniPathway" id="UPA00904">
    <property type="reaction ID" value="UER00874"/>
</dbReference>
<dbReference type="Proteomes" id="UP000002036">
    <property type="component" value="Chromosome E"/>
</dbReference>
<dbReference type="GO" id="GO:0005737">
    <property type="term" value="C:cytoplasm"/>
    <property type="evidence" value="ECO:0007669"/>
    <property type="project" value="UniProtKB-SubCell"/>
</dbReference>
<dbReference type="GO" id="GO:0005634">
    <property type="term" value="C:nucleus"/>
    <property type="evidence" value="ECO:0007669"/>
    <property type="project" value="UniProtKB-SubCell"/>
</dbReference>
<dbReference type="GO" id="GO:0046523">
    <property type="term" value="F:S-methyl-5-thioribose-1-phosphate isomerase activity"/>
    <property type="evidence" value="ECO:0007669"/>
    <property type="project" value="UniProtKB-UniRule"/>
</dbReference>
<dbReference type="GO" id="GO:0019509">
    <property type="term" value="P:L-methionine salvage from methylthioadenosine"/>
    <property type="evidence" value="ECO:0007669"/>
    <property type="project" value="UniProtKB-UniRule"/>
</dbReference>
<dbReference type="FunFam" id="1.20.120.420:FF:000006">
    <property type="entry name" value="Methylthioribose-1-phosphate isomerase"/>
    <property type="match status" value="1"/>
</dbReference>
<dbReference type="Gene3D" id="1.20.120.420">
    <property type="entry name" value="translation initiation factor eif-2b, domain 1"/>
    <property type="match status" value="1"/>
</dbReference>
<dbReference type="Gene3D" id="3.40.50.10470">
    <property type="entry name" value="Translation initiation factor eif-2b, domain 2"/>
    <property type="match status" value="1"/>
</dbReference>
<dbReference type="HAMAP" id="MF_01678">
    <property type="entry name" value="Salvage_MtnA"/>
    <property type="match status" value="1"/>
</dbReference>
<dbReference type="InterPro" id="IPR000649">
    <property type="entry name" value="IF-2B-related"/>
</dbReference>
<dbReference type="InterPro" id="IPR005251">
    <property type="entry name" value="IF-M1Pi"/>
</dbReference>
<dbReference type="InterPro" id="IPR042529">
    <property type="entry name" value="IF_2B-like_C"/>
</dbReference>
<dbReference type="InterPro" id="IPR011559">
    <property type="entry name" value="Initiation_fac_2B_a/b/d"/>
</dbReference>
<dbReference type="InterPro" id="IPR027363">
    <property type="entry name" value="M1Pi_N"/>
</dbReference>
<dbReference type="InterPro" id="IPR037171">
    <property type="entry name" value="NagB/RpiA_transferase-like"/>
</dbReference>
<dbReference type="NCBIfam" id="TIGR00524">
    <property type="entry name" value="eIF-2B_rel"/>
    <property type="match status" value="1"/>
</dbReference>
<dbReference type="PANTHER" id="PTHR43475">
    <property type="entry name" value="METHYLTHIORIBOSE-1-PHOSPHATE ISOMERASE"/>
    <property type="match status" value="1"/>
</dbReference>
<dbReference type="PANTHER" id="PTHR43475:SF1">
    <property type="entry name" value="METHYLTHIORIBOSE-1-PHOSPHATE ISOMERASE"/>
    <property type="match status" value="1"/>
</dbReference>
<dbReference type="Pfam" id="PF01008">
    <property type="entry name" value="IF-2B"/>
    <property type="match status" value="1"/>
</dbReference>
<dbReference type="SUPFAM" id="SSF100950">
    <property type="entry name" value="NagB/RpiA/CoA transferase-like"/>
    <property type="match status" value="1"/>
</dbReference>
<accession>C5DHL1</accession>
<feature type="chain" id="PRO_0000402031" description="Methylthioribose-1-phosphate isomerase">
    <location>
        <begin position="1"/>
        <end position="417"/>
    </location>
</feature>
<feature type="active site" description="Proton donor" evidence="1">
    <location>
        <position position="285"/>
    </location>
</feature>
<feature type="site" description="Transition state stabilizer" evidence="1">
    <location>
        <position position="181"/>
    </location>
</feature>
<sequence>MSLEAIQFDRSHRDDISVRVLDQLLLPYTTKYVPIYTIDDGYTVINTMQVRGAPAIAIVGALAVLMEIQLLQNDGFARTQTFYDISSFELTRSALSQRLDFLLSSRPTAVNLSNALREIRVLLAQSAGLAAFGNGVYDFVCRLIDEDLTNNVKMGDNGAAFLLDALQQEGFDEDFAVLTICNTGSLATSGYGTALGVVRSLWNDSLAKSQAPGDGSAKKRKLNQGRAKMVQVYPLETRPYNQGARLTAYELVHDQIPATLIPDSSIAYRIATSPVPIKAAFVGADRIVRNGDTANKIGTYQLALVCKHFGIKFFVTAPKTTIDSKTETGAGIVVEERKPNEFKHVSGTLIDSQTGLPCVDNQDKPVSASVGVAPSEIDVWNPAFDITPHELIDGIVTEDGVFTKSASGSFDLTNLFA</sequence>
<keyword id="KW-0028">Amino-acid biosynthesis</keyword>
<keyword id="KW-0963">Cytoplasm</keyword>
<keyword id="KW-0413">Isomerase</keyword>
<keyword id="KW-0486">Methionine biosynthesis</keyword>
<keyword id="KW-0539">Nucleus</keyword>
<keyword id="KW-1185">Reference proteome</keyword>
<protein>
    <recommendedName>
        <fullName evidence="1">Methylthioribose-1-phosphate isomerase</fullName>
        <shortName evidence="1">M1Pi</shortName>
        <shortName evidence="1">MTR-1-P isomerase</shortName>
        <ecNumber evidence="1">5.3.1.23</ecNumber>
    </recommendedName>
    <alternativeName>
        <fullName evidence="1">S-methyl-5-thioribose-1-phosphate isomerase</fullName>
    </alternativeName>
    <alternativeName>
        <fullName evidence="1">Translation initiation factor eIF-2B subunit alpha/beta/delta-like protein</fullName>
    </alternativeName>
</protein>
<proteinExistence type="inferred from homology"/>
<gene>
    <name evidence="1" type="primary">MRI1</name>
    <name type="ordered locus">KLTH0E05236g</name>
</gene>
<name>MTNA_LACTC</name>
<comment type="function">
    <text evidence="1">Catalyzes the interconversion of methylthioribose-1-phosphate (MTR-1-P) into methylthioribulose-1-phosphate (MTRu-1-P).</text>
</comment>
<comment type="catalytic activity">
    <reaction evidence="1">
        <text>5-(methylsulfanyl)-alpha-D-ribose 1-phosphate = 5-(methylsulfanyl)-D-ribulose 1-phosphate</text>
        <dbReference type="Rhea" id="RHEA:19989"/>
        <dbReference type="ChEBI" id="CHEBI:58533"/>
        <dbReference type="ChEBI" id="CHEBI:58548"/>
        <dbReference type="EC" id="5.3.1.23"/>
    </reaction>
</comment>
<comment type="pathway">
    <text evidence="1">Amino-acid biosynthesis; L-methionine biosynthesis via salvage pathway; L-methionine from S-methyl-5-thio-alpha-D-ribose 1-phosphate: step 1/6.</text>
</comment>
<comment type="subcellular location">
    <subcellularLocation>
        <location evidence="1">Cytoplasm</location>
    </subcellularLocation>
    <subcellularLocation>
        <location evidence="1">Nucleus</location>
    </subcellularLocation>
</comment>
<comment type="similarity">
    <text evidence="1">Belongs to the eIF-2B alpha/beta/delta subunits family. MtnA subfamily.</text>
</comment>
<evidence type="ECO:0000255" key="1">
    <source>
        <dbReference type="HAMAP-Rule" id="MF_03119"/>
    </source>
</evidence>
<reference key="1">
    <citation type="journal article" date="2009" name="Genome Res.">
        <title>Comparative genomics of protoploid Saccharomycetaceae.</title>
        <authorList>
            <consortium name="The Genolevures Consortium"/>
            <person name="Souciet J.-L."/>
            <person name="Dujon B."/>
            <person name="Gaillardin C."/>
            <person name="Johnston M."/>
            <person name="Baret P.V."/>
            <person name="Cliften P."/>
            <person name="Sherman D.J."/>
            <person name="Weissenbach J."/>
            <person name="Westhof E."/>
            <person name="Wincker P."/>
            <person name="Jubin C."/>
            <person name="Poulain J."/>
            <person name="Barbe V."/>
            <person name="Segurens B."/>
            <person name="Artiguenave F."/>
            <person name="Anthouard V."/>
            <person name="Vacherie B."/>
            <person name="Val M.-E."/>
            <person name="Fulton R.S."/>
            <person name="Minx P."/>
            <person name="Wilson R."/>
            <person name="Durrens P."/>
            <person name="Jean G."/>
            <person name="Marck C."/>
            <person name="Martin T."/>
            <person name="Nikolski M."/>
            <person name="Rolland T."/>
            <person name="Seret M.-L."/>
            <person name="Casaregola S."/>
            <person name="Despons L."/>
            <person name="Fairhead C."/>
            <person name="Fischer G."/>
            <person name="Lafontaine I."/>
            <person name="Leh V."/>
            <person name="Lemaire M."/>
            <person name="de Montigny J."/>
            <person name="Neuveglise C."/>
            <person name="Thierry A."/>
            <person name="Blanc-Lenfle I."/>
            <person name="Bleykasten C."/>
            <person name="Diffels J."/>
            <person name="Fritsch E."/>
            <person name="Frangeul L."/>
            <person name="Goeffon A."/>
            <person name="Jauniaux N."/>
            <person name="Kachouri-Lafond R."/>
            <person name="Payen C."/>
            <person name="Potier S."/>
            <person name="Pribylova L."/>
            <person name="Ozanne C."/>
            <person name="Richard G.-F."/>
            <person name="Sacerdot C."/>
            <person name="Straub M.-L."/>
            <person name="Talla E."/>
        </authorList>
    </citation>
    <scope>NUCLEOTIDE SEQUENCE [LARGE SCALE GENOMIC DNA]</scope>
    <source>
        <strain>ATCC 56472 / CBS 6340 / NRRL Y-8284</strain>
    </source>
</reference>
<organism>
    <name type="scientific">Lachancea thermotolerans (strain ATCC 56472 / CBS 6340 / NRRL Y-8284)</name>
    <name type="common">Yeast</name>
    <name type="synonym">Kluyveromyces thermotolerans</name>
    <dbReference type="NCBI Taxonomy" id="559295"/>
    <lineage>
        <taxon>Eukaryota</taxon>
        <taxon>Fungi</taxon>
        <taxon>Dikarya</taxon>
        <taxon>Ascomycota</taxon>
        <taxon>Saccharomycotina</taxon>
        <taxon>Saccharomycetes</taxon>
        <taxon>Saccharomycetales</taxon>
        <taxon>Saccharomycetaceae</taxon>
        <taxon>Lachancea</taxon>
    </lineage>
</organism>